<sequence length="511" mass="61325">MEKFEEISEKHKSRQQYFVYPLLFQEFLYTFAHDYGLNDSEPVEILSCNKKKFSSLLVKRLIIRMYQQNFWINSVNHPNQDRLLDYKNYFYSDFFSQILSEGFAIVVEIPFSLREFFCPKEKEIPKFQNLRSIHSIFSFLEDKFLHLHSLSHIEIPYPIHLEILVQLLQYHIQDVPSLHLLRFFLNYYSNWNSFITSIKSFFLLKKKNKRLFRFLYNSYVSEYEFFLLFLRKQSSCLPLASSGGFLERIHFSRKMEHFGIMDPGFFRKTLWFFMDPLMHYVRYQGKAILASKGTLFLKKKWKWYLVNFCQYSFSFWTQPRRIHLNQLANSCFDFLGYLSSVPKSTLLVRNQMLENSFLIDTQMTKFDTIVPATLLIGSLSKAQFCTGSGHPISKPIWTELSDWDILDRFGRICKNLFHYHSGSSKKRTLYRLKYILRLSCARTLARKHKSTVRTFMQRLGSVFLEEFFTEEEQVFSLMFTKTTLFYFRGSHSERIWYLDIIRINGLVNPRN</sequence>
<dbReference type="EMBL" id="AF164400">
    <property type="protein sequence ID" value="AAF66187.1"/>
    <property type="molecule type" value="Genomic_DNA"/>
</dbReference>
<dbReference type="GO" id="GO:0009507">
    <property type="term" value="C:chloroplast"/>
    <property type="evidence" value="ECO:0007669"/>
    <property type="project" value="UniProtKB-SubCell"/>
</dbReference>
<dbReference type="GO" id="GO:0003723">
    <property type="term" value="F:RNA binding"/>
    <property type="evidence" value="ECO:0007669"/>
    <property type="project" value="UniProtKB-KW"/>
</dbReference>
<dbReference type="GO" id="GO:0006397">
    <property type="term" value="P:mRNA processing"/>
    <property type="evidence" value="ECO:0007669"/>
    <property type="project" value="UniProtKB-KW"/>
</dbReference>
<dbReference type="GO" id="GO:0008380">
    <property type="term" value="P:RNA splicing"/>
    <property type="evidence" value="ECO:0007669"/>
    <property type="project" value="UniProtKB-UniRule"/>
</dbReference>
<dbReference type="GO" id="GO:0008033">
    <property type="term" value="P:tRNA processing"/>
    <property type="evidence" value="ECO:0007669"/>
    <property type="project" value="UniProtKB-KW"/>
</dbReference>
<dbReference type="HAMAP" id="MF_01390">
    <property type="entry name" value="MatK"/>
    <property type="match status" value="1"/>
</dbReference>
<dbReference type="InterPro" id="IPR024937">
    <property type="entry name" value="Domain_X"/>
</dbReference>
<dbReference type="InterPro" id="IPR002866">
    <property type="entry name" value="Maturase_MatK"/>
</dbReference>
<dbReference type="InterPro" id="IPR024942">
    <property type="entry name" value="Maturase_MatK_N"/>
</dbReference>
<dbReference type="PANTHER" id="PTHR34811">
    <property type="entry name" value="MATURASE K"/>
    <property type="match status" value="1"/>
</dbReference>
<dbReference type="PANTHER" id="PTHR34811:SF1">
    <property type="entry name" value="MATURASE K"/>
    <property type="match status" value="1"/>
</dbReference>
<dbReference type="Pfam" id="PF01348">
    <property type="entry name" value="Intron_maturas2"/>
    <property type="match status" value="1"/>
</dbReference>
<dbReference type="Pfam" id="PF01824">
    <property type="entry name" value="MatK_N"/>
    <property type="match status" value="1"/>
</dbReference>
<keyword id="KW-0150">Chloroplast</keyword>
<keyword id="KW-0507">mRNA processing</keyword>
<keyword id="KW-0934">Plastid</keyword>
<keyword id="KW-0694">RNA-binding</keyword>
<keyword id="KW-0819">tRNA processing</keyword>
<name>MATK_BRASY</name>
<geneLocation type="chloroplast"/>
<accession>Q9MUZ1</accession>
<feature type="chain" id="PRO_0000143287" description="Maturase K">
    <location>
        <begin position="1"/>
        <end position="511"/>
    </location>
</feature>
<organism>
    <name type="scientific">Brachypodium sylvaticum</name>
    <name type="common">False brome</name>
    <dbReference type="NCBI Taxonomy" id="29664"/>
    <lineage>
        <taxon>Eukaryota</taxon>
        <taxon>Viridiplantae</taxon>
        <taxon>Streptophyta</taxon>
        <taxon>Embryophyta</taxon>
        <taxon>Tracheophyta</taxon>
        <taxon>Spermatophyta</taxon>
        <taxon>Magnoliopsida</taxon>
        <taxon>Liliopsida</taxon>
        <taxon>Poales</taxon>
        <taxon>Poaceae</taxon>
        <taxon>BOP clade</taxon>
        <taxon>Pooideae</taxon>
        <taxon>Stipodae</taxon>
        <taxon>Brachypodieae</taxon>
        <taxon>Brachypodium</taxon>
    </lineage>
</organism>
<evidence type="ECO:0000255" key="1">
    <source>
        <dbReference type="HAMAP-Rule" id="MF_01390"/>
    </source>
</evidence>
<protein>
    <recommendedName>
        <fullName evidence="1">Maturase K</fullName>
    </recommendedName>
    <alternativeName>
        <fullName evidence="1">Intron maturase</fullName>
    </alternativeName>
</protein>
<comment type="function">
    <text evidence="1">Usually encoded in the trnK tRNA gene intron. Probably assists in splicing its own and other chloroplast group II introns.</text>
</comment>
<comment type="subcellular location">
    <subcellularLocation>
        <location>Plastid</location>
        <location>Chloroplast</location>
    </subcellularLocation>
</comment>
<comment type="similarity">
    <text evidence="1">Belongs to the intron maturase 2 family. MatK subfamily.</text>
</comment>
<proteinExistence type="inferred from homology"/>
<reference key="1">
    <citation type="journal article" date="1999" name="Ann. Mo. Bot. Gard.">
        <title>Phylogeny of Poaceae inferred from matK sequences.</title>
        <authorList>
            <person name="Hilu K.W."/>
            <person name="Alice L.A."/>
            <person name="Liang H."/>
        </authorList>
    </citation>
    <scope>NUCLEOTIDE SEQUENCE [GENOMIC DNA]</scope>
</reference>
<gene>
    <name evidence="1" type="primary">matK</name>
</gene>